<evidence type="ECO:0000255" key="1">
    <source>
        <dbReference type="HAMAP-Rule" id="MF_00527"/>
    </source>
</evidence>
<name>3MGH_BORBU</name>
<reference key="1">
    <citation type="journal article" date="1997" name="Nature">
        <title>Genomic sequence of a Lyme disease spirochaete, Borrelia burgdorferi.</title>
        <authorList>
            <person name="Fraser C.M."/>
            <person name="Casjens S."/>
            <person name="Huang W.M."/>
            <person name="Sutton G.G."/>
            <person name="Clayton R.A."/>
            <person name="Lathigra R."/>
            <person name="White O."/>
            <person name="Ketchum K.A."/>
            <person name="Dodson R.J."/>
            <person name="Hickey E.K."/>
            <person name="Gwinn M.L."/>
            <person name="Dougherty B.A."/>
            <person name="Tomb J.-F."/>
            <person name="Fleischmann R.D."/>
            <person name="Richardson D.L."/>
            <person name="Peterson J.D."/>
            <person name="Kerlavage A.R."/>
            <person name="Quackenbush J."/>
            <person name="Salzberg S.L."/>
            <person name="Hanson M."/>
            <person name="van Vugt R."/>
            <person name="Palmer N."/>
            <person name="Adams M.D."/>
            <person name="Gocayne J.D."/>
            <person name="Weidman J.F."/>
            <person name="Utterback T.R."/>
            <person name="Watthey L."/>
            <person name="McDonald L.A."/>
            <person name="Artiach P."/>
            <person name="Bowman C."/>
            <person name="Garland S.A."/>
            <person name="Fujii C."/>
            <person name="Cotton M.D."/>
            <person name="Horst K."/>
            <person name="Roberts K.M."/>
            <person name="Hatch B."/>
            <person name="Smith H.O."/>
            <person name="Venter J.C."/>
        </authorList>
    </citation>
    <scope>NUCLEOTIDE SEQUENCE [LARGE SCALE GENOMIC DNA]</scope>
    <source>
        <strain>ATCC 35210 / DSM 4680 / CIP 102532 / B31</strain>
    </source>
</reference>
<organism>
    <name type="scientific">Borreliella burgdorferi (strain ATCC 35210 / DSM 4680 / CIP 102532 / B31)</name>
    <name type="common">Borrelia burgdorferi</name>
    <dbReference type="NCBI Taxonomy" id="224326"/>
    <lineage>
        <taxon>Bacteria</taxon>
        <taxon>Pseudomonadati</taxon>
        <taxon>Spirochaetota</taxon>
        <taxon>Spirochaetia</taxon>
        <taxon>Spirochaetales</taxon>
        <taxon>Borreliaceae</taxon>
        <taxon>Borreliella</taxon>
    </lineage>
</organism>
<feature type="chain" id="PRO_0000100074" description="Putative 3-methyladenine DNA glycosylase">
    <location>
        <begin position="1"/>
        <end position="186"/>
    </location>
</feature>
<dbReference type="EC" id="3.2.2.-" evidence="1"/>
<dbReference type="EMBL" id="AE000783">
    <property type="protein sequence ID" value="AAC66797.1"/>
    <property type="molecule type" value="Genomic_DNA"/>
</dbReference>
<dbReference type="PIR" id="E70152">
    <property type="entry name" value="E70152"/>
</dbReference>
<dbReference type="RefSeq" id="NP_212556.1">
    <property type="nucleotide sequence ID" value="NC_001318.1"/>
</dbReference>
<dbReference type="RefSeq" id="WP_002657895.1">
    <property type="nucleotide sequence ID" value="NC_001318.1"/>
</dbReference>
<dbReference type="SMR" id="O51383"/>
<dbReference type="STRING" id="224326.BB_0422"/>
<dbReference type="PaxDb" id="224326-BB_0422"/>
<dbReference type="EnsemblBacteria" id="AAC66797">
    <property type="protein sequence ID" value="AAC66797"/>
    <property type="gene ID" value="BB_0422"/>
</dbReference>
<dbReference type="KEGG" id="bbu:BB_0422"/>
<dbReference type="PATRIC" id="fig|224326.49.peg.816"/>
<dbReference type="HOGENOM" id="CLU_060471_0_2_12"/>
<dbReference type="OrthoDB" id="9794313at2"/>
<dbReference type="Proteomes" id="UP000001807">
    <property type="component" value="Chromosome"/>
</dbReference>
<dbReference type="GO" id="GO:0003905">
    <property type="term" value="F:alkylbase DNA N-glycosylase activity"/>
    <property type="evidence" value="ECO:0007669"/>
    <property type="project" value="InterPro"/>
</dbReference>
<dbReference type="GO" id="GO:0003677">
    <property type="term" value="F:DNA binding"/>
    <property type="evidence" value="ECO:0007669"/>
    <property type="project" value="InterPro"/>
</dbReference>
<dbReference type="GO" id="GO:0006284">
    <property type="term" value="P:base-excision repair"/>
    <property type="evidence" value="ECO:0007669"/>
    <property type="project" value="InterPro"/>
</dbReference>
<dbReference type="CDD" id="cd00540">
    <property type="entry name" value="AAG"/>
    <property type="match status" value="1"/>
</dbReference>
<dbReference type="FunFam" id="3.10.300.10:FF:000001">
    <property type="entry name" value="Putative 3-methyladenine DNA glycosylase"/>
    <property type="match status" value="1"/>
</dbReference>
<dbReference type="Gene3D" id="3.10.300.10">
    <property type="entry name" value="Methylpurine-DNA glycosylase (MPG)"/>
    <property type="match status" value="1"/>
</dbReference>
<dbReference type="HAMAP" id="MF_00527">
    <property type="entry name" value="3MGH"/>
    <property type="match status" value="1"/>
</dbReference>
<dbReference type="InterPro" id="IPR011034">
    <property type="entry name" value="Formyl_transferase-like_C_sf"/>
</dbReference>
<dbReference type="InterPro" id="IPR003180">
    <property type="entry name" value="MPG"/>
</dbReference>
<dbReference type="InterPro" id="IPR036995">
    <property type="entry name" value="MPG_sf"/>
</dbReference>
<dbReference type="NCBIfam" id="TIGR00567">
    <property type="entry name" value="3mg"/>
    <property type="match status" value="1"/>
</dbReference>
<dbReference type="PANTHER" id="PTHR10429">
    <property type="entry name" value="DNA-3-METHYLADENINE GLYCOSYLASE"/>
    <property type="match status" value="1"/>
</dbReference>
<dbReference type="PANTHER" id="PTHR10429:SF0">
    <property type="entry name" value="DNA-3-METHYLADENINE GLYCOSYLASE"/>
    <property type="match status" value="1"/>
</dbReference>
<dbReference type="Pfam" id="PF02245">
    <property type="entry name" value="Pur_DNA_glyco"/>
    <property type="match status" value="1"/>
</dbReference>
<dbReference type="SUPFAM" id="SSF50486">
    <property type="entry name" value="FMT C-terminal domain-like"/>
    <property type="match status" value="1"/>
</dbReference>
<accession>O51383</accession>
<gene>
    <name type="ordered locus">BB_0422</name>
</gene>
<comment type="similarity">
    <text evidence="1">Belongs to the DNA glycosylase MPG family.</text>
</comment>
<keyword id="KW-0227">DNA damage</keyword>
<keyword id="KW-0234">DNA repair</keyword>
<keyword id="KW-0378">Hydrolase</keyword>
<keyword id="KW-1185">Reference proteome</keyword>
<proteinExistence type="inferred from homology"/>
<sequence>MDRYFFLQDATTVAKLLLGNLLIRKIDKEEIVTRIVETEAYMGITDSACHSYGGKITNRTSAMYRIGGYSYVYIIYGMHYMFNVVTADKNNPQAVLIRSVEPISPLLGEKSILTNGPGKLTKFLNIDLTFNKVDLIGNNELFLQRGLNLDFNIVCSKRININYAQESDINKLWRFYIKDNKFVSRR</sequence>
<protein>
    <recommendedName>
        <fullName evidence="1">Putative 3-methyladenine DNA glycosylase</fullName>
        <ecNumber evidence="1">3.2.2.-</ecNumber>
    </recommendedName>
</protein>